<feature type="chain" id="PRO_1000080526" description="4-hydroxy-tetrahydrodipicolinate synthase">
    <location>
        <begin position="1"/>
        <end position="289"/>
    </location>
</feature>
<feature type="active site" description="Proton donor/acceptor" evidence="1">
    <location>
        <position position="133"/>
    </location>
</feature>
<feature type="active site" description="Schiff-base intermediate with substrate" evidence="1">
    <location>
        <position position="161"/>
    </location>
</feature>
<feature type="binding site" evidence="1">
    <location>
        <position position="45"/>
    </location>
    <ligand>
        <name>pyruvate</name>
        <dbReference type="ChEBI" id="CHEBI:15361"/>
    </ligand>
</feature>
<feature type="binding site" evidence="1">
    <location>
        <position position="200"/>
    </location>
    <ligand>
        <name>pyruvate</name>
        <dbReference type="ChEBI" id="CHEBI:15361"/>
    </ligand>
</feature>
<feature type="site" description="Part of a proton relay during catalysis" evidence="1">
    <location>
        <position position="44"/>
    </location>
</feature>
<feature type="site" description="Part of a proton relay during catalysis" evidence="1">
    <location>
        <position position="107"/>
    </location>
</feature>
<proteinExistence type="inferred from homology"/>
<dbReference type="EC" id="4.3.3.7" evidence="1"/>
<dbReference type="EMBL" id="CP000733">
    <property type="protein sequence ID" value="ABS77900.2"/>
    <property type="status" value="ALT_INIT"/>
    <property type="molecule type" value="Genomic_DNA"/>
</dbReference>
<dbReference type="RefSeq" id="WP_005770744.1">
    <property type="nucleotide sequence ID" value="NC_009727.1"/>
</dbReference>
<dbReference type="SMR" id="A9KFS0"/>
<dbReference type="KEGG" id="cbd:CBUD_1306"/>
<dbReference type="HOGENOM" id="CLU_049343_7_1_6"/>
<dbReference type="UniPathway" id="UPA00034">
    <property type="reaction ID" value="UER00017"/>
</dbReference>
<dbReference type="Proteomes" id="UP000008555">
    <property type="component" value="Chromosome"/>
</dbReference>
<dbReference type="GO" id="GO:0005829">
    <property type="term" value="C:cytosol"/>
    <property type="evidence" value="ECO:0007669"/>
    <property type="project" value="TreeGrafter"/>
</dbReference>
<dbReference type="GO" id="GO:0008840">
    <property type="term" value="F:4-hydroxy-tetrahydrodipicolinate synthase activity"/>
    <property type="evidence" value="ECO:0007669"/>
    <property type="project" value="UniProtKB-UniRule"/>
</dbReference>
<dbReference type="GO" id="GO:0019877">
    <property type="term" value="P:diaminopimelate biosynthetic process"/>
    <property type="evidence" value="ECO:0007669"/>
    <property type="project" value="UniProtKB-UniRule"/>
</dbReference>
<dbReference type="GO" id="GO:0009089">
    <property type="term" value="P:lysine biosynthetic process via diaminopimelate"/>
    <property type="evidence" value="ECO:0007669"/>
    <property type="project" value="UniProtKB-UniRule"/>
</dbReference>
<dbReference type="CDD" id="cd00950">
    <property type="entry name" value="DHDPS"/>
    <property type="match status" value="1"/>
</dbReference>
<dbReference type="Gene3D" id="3.20.20.70">
    <property type="entry name" value="Aldolase class I"/>
    <property type="match status" value="1"/>
</dbReference>
<dbReference type="HAMAP" id="MF_00418">
    <property type="entry name" value="DapA"/>
    <property type="match status" value="1"/>
</dbReference>
<dbReference type="InterPro" id="IPR013785">
    <property type="entry name" value="Aldolase_TIM"/>
</dbReference>
<dbReference type="InterPro" id="IPR005263">
    <property type="entry name" value="DapA"/>
</dbReference>
<dbReference type="InterPro" id="IPR002220">
    <property type="entry name" value="DapA-like"/>
</dbReference>
<dbReference type="InterPro" id="IPR020625">
    <property type="entry name" value="Schiff_base-form_aldolases_AS"/>
</dbReference>
<dbReference type="InterPro" id="IPR020624">
    <property type="entry name" value="Schiff_base-form_aldolases_CS"/>
</dbReference>
<dbReference type="NCBIfam" id="TIGR00674">
    <property type="entry name" value="dapA"/>
    <property type="match status" value="1"/>
</dbReference>
<dbReference type="PANTHER" id="PTHR12128:SF66">
    <property type="entry name" value="4-HYDROXY-2-OXOGLUTARATE ALDOLASE, MITOCHONDRIAL"/>
    <property type="match status" value="1"/>
</dbReference>
<dbReference type="PANTHER" id="PTHR12128">
    <property type="entry name" value="DIHYDRODIPICOLINATE SYNTHASE"/>
    <property type="match status" value="1"/>
</dbReference>
<dbReference type="Pfam" id="PF00701">
    <property type="entry name" value="DHDPS"/>
    <property type="match status" value="1"/>
</dbReference>
<dbReference type="PIRSF" id="PIRSF001365">
    <property type="entry name" value="DHDPS"/>
    <property type="match status" value="1"/>
</dbReference>
<dbReference type="PRINTS" id="PR00146">
    <property type="entry name" value="DHPICSNTHASE"/>
</dbReference>
<dbReference type="SMART" id="SM01130">
    <property type="entry name" value="DHDPS"/>
    <property type="match status" value="1"/>
</dbReference>
<dbReference type="SUPFAM" id="SSF51569">
    <property type="entry name" value="Aldolase"/>
    <property type="match status" value="1"/>
</dbReference>
<dbReference type="PROSITE" id="PS00665">
    <property type="entry name" value="DHDPS_1"/>
    <property type="match status" value="1"/>
</dbReference>
<dbReference type="PROSITE" id="PS00666">
    <property type="entry name" value="DHDPS_2"/>
    <property type="match status" value="1"/>
</dbReference>
<comment type="function">
    <text evidence="1">Catalyzes the condensation of (S)-aspartate-beta-semialdehyde [(S)-ASA] and pyruvate to 4-hydroxy-tetrahydrodipicolinate (HTPA).</text>
</comment>
<comment type="catalytic activity">
    <reaction evidence="1">
        <text>L-aspartate 4-semialdehyde + pyruvate = (2S,4S)-4-hydroxy-2,3,4,5-tetrahydrodipicolinate + H2O + H(+)</text>
        <dbReference type="Rhea" id="RHEA:34171"/>
        <dbReference type="ChEBI" id="CHEBI:15361"/>
        <dbReference type="ChEBI" id="CHEBI:15377"/>
        <dbReference type="ChEBI" id="CHEBI:15378"/>
        <dbReference type="ChEBI" id="CHEBI:67139"/>
        <dbReference type="ChEBI" id="CHEBI:537519"/>
        <dbReference type="EC" id="4.3.3.7"/>
    </reaction>
</comment>
<comment type="pathway">
    <text evidence="1">Amino-acid biosynthesis; L-lysine biosynthesis via DAP pathway; (S)-tetrahydrodipicolinate from L-aspartate: step 3/4.</text>
</comment>
<comment type="subunit">
    <text evidence="1">Homotetramer; dimer of dimers.</text>
</comment>
<comment type="subcellular location">
    <subcellularLocation>
        <location evidence="1">Cytoplasm</location>
    </subcellularLocation>
</comment>
<comment type="similarity">
    <text evidence="1">Belongs to the DapA family.</text>
</comment>
<comment type="caution">
    <text evidence="2">Was originally thought to be a dihydrodipicolinate synthase (DHDPS), catalyzing the condensation of (S)-aspartate-beta-semialdehyde [(S)-ASA] and pyruvate to dihydrodipicolinate (DHDP). However, it was shown in E.coli that the product of the enzymatic reaction is not dihydrodipicolinate but in fact (4S)-4-hydroxy-2,3,4,5-tetrahydro-(2S)-dipicolinic acid (HTPA), and that the consecutive dehydration reaction leading to DHDP is not spontaneous but catalyzed by DapB.</text>
</comment>
<comment type="sequence caution" evidence="2">
    <conflict type="erroneous initiation">
        <sequence resource="EMBL-CDS" id="ABS77900"/>
    </conflict>
</comment>
<sequence>MFNGSLVALVTPMQENGEIDYSNLKELVEWHLENDTDGLVILGTTGESPTITAEERHKIIRQVVDQVNKKIPIIVGTGANSTVHTIEMTQQAMELGADAALIVTPYYNKPTQEGLFQYFKTIAEAVPIAQILYNVPSRTACDLLPETVIRIAKCSNVVGLKEATGDIQRVKQLKAEDLDLLSGDDKTAMDFMLAGGKGVISVVANVVPKPYHAFCITAVSGNVELAKKENDQLSPLYDSLFVESNPIPVKWALSQMGVIPKGIRLPLTPLSERYHAKVRESLQQVGIKC</sequence>
<organism>
    <name type="scientific">Coxiella burnetii (strain Dugway 5J108-111)</name>
    <dbReference type="NCBI Taxonomy" id="434922"/>
    <lineage>
        <taxon>Bacteria</taxon>
        <taxon>Pseudomonadati</taxon>
        <taxon>Pseudomonadota</taxon>
        <taxon>Gammaproteobacteria</taxon>
        <taxon>Legionellales</taxon>
        <taxon>Coxiellaceae</taxon>
        <taxon>Coxiella</taxon>
    </lineage>
</organism>
<protein>
    <recommendedName>
        <fullName evidence="1">4-hydroxy-tetrahydrodipicolinate synthase</fullName>
        <shortName evidence="1">HTPA synthase</shortName>
        <ecNumber evidence="1">4.3.3.7</ecNumber>
    </recommendedName>
</protein>
<name>DAPA_COXBN</name>
<evidence type="ECO:0000255" key="1">
    <source>
        <dbReference type="HAMAP-Rule" id="MF_00418"/>
    </source>
</evidence>
<evidence type="ECO:0000305" key="2"/>
<gene>
    <name evidence="1" type="primary">dapA</name>
    <name type="ordered locus">CBUD_1306</name>
</gene>
<reference key="1">
    <citation type="journal article" date="2009" name="Infect. Immun.">
        <title>Comparative genomics reveal extensive transposon-mediated genomic plasticity and diversity among potential effector proteins within the genus Coxiella.</title>
        <authorList>
            <person name="Beare P.A."/>
            <person name="Unsworth N."/>
            <person name="Andoh M."/>
            <person name="Voth D.E."/>
            <person name="Omsland A."/>
            <person name="Gilk S.D."/>
            <person name="Williams K.P."/>
            <person name="Sobral B.W."/>
            <person name="Kupko J.J. III"/>
            <person name="Porcella S.F."/>
            <person name="Samuel J.E."/>
            <person name="Heinzen R.A."/>
        </authorList>
    </citation>
    <scope>NUCLEOTIDE SEQUENCE [LARGE SCALE GENOMIC DNA]</scope>
    <source>
        <strain>Dugway 5J108-111</strain>
    </source>
</reference>
<accession>A9KFS0</accession>
<keyword id="KW-0028">Amino-acid biosynthesis</keyword>
<keyword id="KW-0963">Cytoplasm</keyword>
<keyword id="KW-0220">Diaminopimelate biosynthesis</keyword>
<keyword id="KW-0456">Lyase</keyword>
<keyword id="KW-0457">Lysine biosynthesis</keyword>
<keyword id="KW-0704">Schiff base</keyword>